<dbReference type="EMBL" id="CP000736">
    <property type="protein sequence ID" value="ABR53588.1"/>
    <property type="molecule type" value="Genomic_DNA"/>
</dbReference>
<dbReference type="KEGG" id="sah:SaurJH1_2766"/>
<dbReference type="HOGENOM" id="CLU_120023_0_0_9"/>
<dbReference type="GO" id="GO:0005886">
    <property type="term" value="C:plasma membrane"/>
    <property type="evidence" value="ECO:0007669"/>
    <property type="project" value="UniProtKB-SubCell"/>
</dbReference>
<dbReference type="Gene3D" id="1.10.1760.20">
    <property type="match status" value="1"/>
</dbReference>
<dbReference type="HAMAP" id="MF_01572">
    <property type="entry name" value="UPF0397"/>
    <property type="match status" value="1"/>
</dbReference>
<dbReference type="InterPro" id="IPR009825">
    <property type="entry name" value="ECF_substrate-spec-like"/>
</dbReference>
<dbReference type="InterPro" id="IPR022914">
    <property type="entry name" value="UPF0397"/>
</dbReference>
<dbReference type="NCBIfam" id="NF010182">
    <property type="entry name" value="PRK13661.1"/>
    <property type="match status" value="1"/>
</dbReference>
<dbReference type="PANTHER" id="PTHR37815">
    <property type="entry name" value="UPF0397 PROTEIN BC_2624-RELATED"/>
    <property type="match status" value="1"/>
</dbReference>
<dbReference type="PANTHER" id="PTHR37815:SF3">
    <property type="entry name" value="UPF0397 PROTEIN SPR0429"/>
    <property type="match status" value="1"/>
</dbReference>
<dbReference type="Pfam" id="PF07155">
    <property type="entry name" value="ECF-ribofla_trS"/>
    <property type="match status" value="1"/>
</dbReference>
<sequence>MKKQDISVKTVVAIGIGAAVFVILGRFVVIPTGFPNTNIETSYAFLALISAIFGPFAGLMTGLVGHAIKDFTTYGSAWWSWVICSGIIGCLYGWIGLKLNLSSGLFSRKSMIYFNIGQIIANIICWALIAPTLDILIYNEPANKVYTQGVISAVLNIISVGIIGTILLKAYASSQIKKGSLRKE</sequence>
<evidence type="ECO:0000255" key="1">
    <source>
        <dbReference type="HAMAP-Rule" id="MF_01572"/>
    </source>
</evidence>
<name>Y2766_STAA2</name>
<keyword id="KW-1003">Cell membrane</keyword>
<keyword id="KW-0472">Membrane</keyword>
<keyword id="KW-0812">Transmembrane</keyword>
<keyword id="KW-1133">Transmembrane helix</keyword>
<feature type="chain" id="PRO_1000087875" description="UPF0397 protein SaurJH1_2766">
    <location>
        <begin position="1"/>
        <end position="184"/>
    </location>
</feature>
<feature type="transmembrane region" description="Helical" evidence="1">
    <location>
        <begin position="11"/>
        <end position="31"/>
    </location>
</feature>
<feature type="transmembrane region" description="Helical" evidence="1">
    <location>
        <begin position="44"/>
        <end position="64"/>
    </location>
</feature>
<feature type="transmembrane region" description="Helical" evidence="1">
    <location>
        <begin position="77"/>
        <end position="97"/>
    </location>
</feature>
<feature type="transmembrane region" description="Helical" evidence="1">
    <location>
        <begin position="111"/>
        <end position="131"/>
    </location>
</feature>
<feature type="transmembrane region" description="Helical" evidence="1">
    <location>
        <begin position="148"/>
        <end position="168"/>
    </location>
</feature>
<comment type="subcellular location">
    <subcellularLocation>
        <location evidence="1">Cell membrane</location>
        <topology evidence="1">Multi-pass membrane protein</topology>
    </subcellularLocation>
</comment>
<comment type="similarity">
    <text evidence="1">Belongs to the UPF0397 family.</text>
</comment>
<reference key="1">
    <citation type="submission" date="2007-06" db="EMBL/GenBank/DDBJ databases">
        <title>Complete sequence of chromosome of Staphylococcus aureus subsp. aureus JH1.</title>
        <authorList>
            <consortium name="US DOE Joint Genome Institute"/>
            <person name="Copeland A."/>
            <person name="Lucas S."/>
            <person name="Lapidus A."/>
            <person name="Barry K."/>
            <person name="Detter J.C."/>
            <person name="Glavina del Rio T."/>
            <person name="Hammon N."/>
            <person name="Israni S."/>
            <person name="Dalin E."/>
            <person name="Tice H."/>
            <person name="Pitluck S."/>
            <person name="Chain P."/>
            <person name="Malfatti S."/>
            <person name="Shin M."/>
            <person name="Vergez L."/>
            <person name="Schmutz J."/>
            <person name="Larimer F."/>
            <person name="Land M."/>
            <person name="Hauser L."/>
            <person name="Kyrpides N."/>
            <person name="Ivanova N."/>
            <person name="Tomasz A."/>
            <person name="Richardson P."/>
        </authorList>
    </citation>
    <scope>NUCLEOTIDE SEQUENCE [LARGE SCALE GENOMIC DNA]</scope>
    <source>
        <strain>JH1</strain>
    </source>
</reference>
<protein>
    <recommendedName>
        <fullName evidence="1">UPF0397 protein SaurJH1_2766</fullName>
    </recommendedName>
</protein>
<accession>A6U570</accession>
<proteinExistence type="inferred from homology"/>
<organism>
    <name type="scientific">Staphylococcus aureus (strain JH1)</name>
    <dbReference type="NCBI Taxonomy" id="359787"/>
    <lineage>
        <taxon>Bacteria</taxon>
        <taxon>Bacillati</taxon>
        <taxon>Bacillota</taxon>
        <taxon>Bacilli</taxon>
        <taxon>Bacillales</taxon>
        <taxon>Staphylococcaceae</taxon>
        <taxon>Staphylococcus</taxon>
    </lineage>
</organism>
<gene>
    <name type="ordered locus">SaurJH1_2766</name>
</gene>